<accession>P83776</accession>
<accession>A0A1D8PSR8</accession>
<accession>Q5A6L2</accession>
<accession>Q5A6V6</accession>
<keyword id="KW-0067">ATP-binding</keyword>
<keyword id="KW-0963">Cytoplasm</keyword>
<keyword id="KW-0903">Direct protein sequencing</keyword>
<keyword id="KW-0324">Glycolysis</keyword>
<keyword id="KW-0418">Kinase</keyword>
<keyword id="KW-0547">Nucleotide-binding</keyword>
<keyword id="KW-1185">Reference proteome</keyword>
<keyword id="KW-0808">Transferase</keyword>
<name>HXKB_CANAL</name>
<comment type="function">
    <text evidence="1">Catalyzes the phosphorylation of hexose, such as D-glucose and D-fructose, to hexose 6-phosphate (D-glucose 6-phosphate and D-fructose 6-phosphate, respectively). Mediates the initial step of glycolysis by catalyzing phosphorylation of D-glucose to D-glucose 6-phosphate.</text>
</comment>
<comment type="catalytic activity">
    <reaction evidence="1">
        <text>a D-hexose + ATP = a D-hexose 6-phosphate + ADP + H(+)</text>
        <dbReference type="Rhea" id="RHEA:22740"/>
        <dbReference type="ChEBI" id="CHEBI:4194"/>
        <dbReference type="ChEBI" id="CHEBI:15378"/>
        <dbReference type="ChEBI" id="CHEBI:30616"/>
        <dbReference type="ChEBI" id="CHEBI:229467"/>
        <dbReference type="ChEBI" id="CHEBI:456216"/>
        <dbReference type="EC" id="2.7.1.1"/>
    </reaction>
    <physiologicalReaction direction="left-to-right" evidence="1">
        <dbReference type="Rhea" id="RHEA:22741"/>
    </physiologicalReaction>
</comment>
<comment type="catalytic activity">
    <reaction evidence="1">
        <text>D-fructose + ATP = D-fructose 6-phosphate + ADP + H(+)</text>
        <dbReference type="Rhea" id="RHEA:16125"/>
        <dbReference type="ChEBI" id="CHEBI:15378"/>
        <dbReference type="ChEBI" id="CHEBI:30616"/>
        <dbReference type="ChEBI" id="CHEBI:37721"/>
        <dbReference type="ChEBI" id="CHEBI:61527"/>
        <dbReference type="ChEBI" id="CHEBI:456216"/>
        <dbReference type="EC" id="2.7.1.1"/>
    </reaction>
    <physiologicalReaction direction="left-to-right" evidence="1">
        <dbReference type="Rhea" id="RHEA:16126"/>
    </physiologicalReaction>
</comment>
<comment type="catalytic activity">
    <reaction evidence="1">
        <text>D-glucose + ATP = D-glucose 6-phosphate + ADP + H(+)</text>
        <dbReference type="Rhea" id="RHEA:17825"/>
        <dbReference type="ChEBI" id="CHEBI:4167"/>
        <dbReference type="ChEBI" id="CHEBI:15378"/>
        <dbReference type="ChEBI" id="CHEBI:30616"/>
        <dbReference type="ChEBI" id="CHEBI:61548"/>
        <dbReference type="ChEBI" id="CHEBI:456216"/>
        <dbReference type="EC" id="2.7.1.1"/>
    </reaction>
</comment>
<comment type="pathway">
    <text evidence="1">Carbohydrate metabolism; hexose metabolism.</text>
</comment>
<comment type="pathway">
    <text evidence="1">Carbohydrate degradation; glycolysis; D-glyceraldehyde 3-phosphate and glycerone phosphate from D-glucose: step 1/4.</text>
</comment>
<comment type="subunit">
    <text evidence="1">Monomer.</text>
</comment>
<comment type="subcellular location">
    <subcellularLocation>
        <location evidence="3">Cytoplasm</location>
    </subcellularLocation>
</comment>
<comment type="miscellaneous">
    <text>Has antigenic properties. Elicits a specific immune response in systemic candidiasis human patients undergoing malignant hematological disorders.</text>
</comment>
<comment type="similarity">
    <text evidence="2 4">Belongs to the hexokinase family.</text>
</comment>
<reference key="1">
    <citation type="journal article" date="2004" name="Proc. Natl. Acad. Sci. U.S.A.">
        <title>The diploid genome sequence of Candida albicans.</title>
        <authorList>
            <person name="Jones T."/>
            <person name="Federspiel N.A."/>
            <person name="Chibana H."/>
            <person name="Dungan J."/>
            <person name="Kalman S."/>
            <person name="Magee B.B."/>
            <person name="Newport G."/>
            <person name="Thorstenson Y.R."/>
            <person name="Agabian N."/>
            <person name="Magee P.T."/>
            <person name="Davis R.W."/>
            <person name="Scherer S."/>
        </authorList>
    </citation>
    <scope>NUCLEOTIDE SEQUENCE [LARGE SCALE GENOMIC DNA]</scope>
    <source>
        <strain>SC5314 / ATCC MYA-2876</strain>
    </source>
</reference>
<reference key="2">
    <citation type="journal article" date="2007" name="Genome Biol.">
        <title>Assembly of the Candida albicans genome into sixteen supercontigs aligned on the eight chromosomes.</title>
        <authorList>
            <person name="van het Hoog M."/>
            <person name="Rast T.J."/>
            <person name="Martchenko M."/>
            <person name="Grindle S."/>
            <person name="Dignard D."/>
            <person name="Hogues H."/>
            <person name="Cuomo C."/>
            <person name="Berriman M."/>
            <person name="Scherer S."/>
            <person name="Magee B.B."/>
            <person name="Whiteway M."/>
            <person name="Chibana H."/>
            <person name="Nantel A."/>
            <person name="Magee P.T."/>
        </authorList>
    </citation>
    <scope>GENOME REANNOTATION</scope>
    <source>
        <strain>SC5314 / ATCC MYA-2876</strain>
    </source>
</reference>
<reference key="3">
    <citation type="journal article" date="2013" name="Genome Biol.">
        <title>Assembly of a phased diploid Candida albicans genome facilitates allele-specific measurements and provides a simple model for repeat and indel structure.</title>
        <authorList>
            <person name="Muzzey D."/>
            <person name="Schwartz K."/>
            <person name="Weissman J.S."/>
            <person name="Sherlock G."/>
        </authorList>
    </citation>
    <scope>NUCLEOTIDE SEQUENCE [LARGE SCALE GENOMIC DNA]</scope>
    <scope>GENOME REANNOTATION</scope>
    <source>
        <strain>SC5314 / ATCC MYA-2876</strain>
    </source>
</reference>
<reference key="4">
    <citation type="journal article" date="2004" name="Proteomics">
        <title>Proteomics-based identification of novel Candida albicans antigens for diagnosis of systemic candidiasis in patients with underlying hematological malignancies.</title>
        <authorList>
            <person name="Pitarch A."/>
            <person name="Abian J."/>
            <person name="Carrascal M."/>
            <person name="Sanchez M."/>
            <person name="Nombela C."/>
            <person name="Gil C."/>
        </authorList>
    </citation>
    <scope>PROTEIN SEQUENCE OF 176-185 AND 317-325</scope>
    <scope>SUBCELLULAR LOCATION</scope>
    <scope>ANTIGENICITY</scope>
    <source>
        <strain>SC5314 / ATCC MYA-2876</strain>
        <tissue>Protoplast</tissue>
    </source>
</reference>
<proteinExistence type="evidence at protein level"/>
<evidence type="ECO:0000250" key="1">
    <source>
        <dbReference type="UniProtKB" id="P33284"/>
    </source>
</evidence>
<evidence type="ECO:0000255" key="2">
    <source>
        <dbReference type="PROSITE-ProRule" id="PRU01084"/>
    </source>
</evidence>
<evidence type="ECO:0000269" key="3">
    <source>
    </source>
</evidence>
<evidence type="ECO:0000305" key="4"/>
<dbReference type="EC" id="2.7.1.1" evidence="1"/>
<dbReference type="EMBL" id="CP017630">
    <property type="protein sequence ID" value="AOW31187.1"/>
    <property type="molecule type" value="Genomic_DNA"/>
</dbReference>
<dbReference type="RefSeq" id="XP_717405.1">
    <property type="nucleotide sequence ID" value="XM_712312.1"/>
</dbReference>
<dbReference type="SMR" id="P83776"/>
<dbReference type="BioGRID" id="1224030">
    <property type="interactions" value="1"/>
</dbReference>
<dbReference type="FunCoup" id="P83776">
    <property type="interactions" value="966"/>
</dbReference>
<dbReference type="STRING" id="237561.P83776"/>
<dbReference type="EnsemblFungi" id="CR_04510W_A-T">
    <property type="protein sequence ID" value="CR_04510W_A-T-p1"/>
    <property type="gene ID" value="CR_04510W_A"/>
</dbReference>
<dbReference type="GeneID" id="3641015"/>
<dbReference type="KEGG" id="cal:CAALFM_CR04510WA"/>
<dbReference type="CGD" id="CAL0000189097">
    <property type="gene designation" value="HXK2"/>
</dbReference>
<dbReference type="VEuPathDB" id="FungiDB:CR_04510W_A"/>
<dbReference type="eggNOG" id="KOG1369">
    <property type="taxonomic scope" value="Eukaryota"/>
</dbReference>
<dbReference type="HOGENOM" id="CLU_014393_5_2_1"/>
<dbReference type="InParanoid" id="P83776"/>
<dbReference type="OrthoDB" id="419537at2759"/>
<dbReference type="UniPathway" id="UPA00109">
    <property type="reaction ID" value="UER00180"/>
</dbReference>
<dbReference type="UniPathway" id="UPA00242"/>
<dbReference type="PHI-base" id="PHI:10643"/>
<dbReference type="PHI-base" id="PHI:8970"/>
<dbReference type="PRO" id="PR:P83776"/>
<dbReference type="Proteomes" id="UP000000559">
    <property type="component" value="Chromosome R"/>
</dbReference>
<dbReference type="GO" id="GO:0005829">
    <property type="term" value="C:cytosol"/>
    <property type="evidence" value="ECO:0000318"/>
    <property type="project" value="GO_Central"/>
</dbReference>
<dbReference type="GO" id="GO:0005739">
    <property type="term" value="C:mitochondrion"/>
    <property type="evidence" value="ECO:0000318"/>
    <property type="project" value="GO_Central"/>
</dbReference>
<dbReference type="GO" id="GO:0005524">
    <property type="term" value="F:ATP binding"/>
    <property type="evidence" value="ECO:0007669"/>
    <property type="project" value="UniProtKB-KW"/>
</dbReference>
<dbReference type="GO" id="GO:0005536">
    <property type="term" value="F:D-glucose binding"/>
    <property type="evidence" value="ECO:0007669"/>
    <property type="project" value="InterPro"/>
</dbReference>
<dbReference type="GO" id="GO:0008865">
    <property type="term" value="F:fructokinase activity"/>
    <property type="evidence" value="ECO:0000318"/>
    <property type="project" value="GO_Central"/>
</dbReference>
<dbReference type="GO" id="GO:0004340">
    <property type="term" value="F:glucokinase activity"/>
    <property type="evidence" value="ECO:0000318"/>
    <property type="project" value="GO_Central"/>
</dbReference>
<dbReference type="GO" id="GO:0004396">
    <property type="term" value="F:hexokinase activity"/>
    <property type="evidence" value="ECO:0000314"/>
    <property type="project" value="CGD"/>
</dbReference>
<dbReference type="GO" id="GO:0019158">
    <property type="term" value="F:mannokinase activity"/>
    <property type="evidence" value="ECO:0000318"/>
    <property type="project" value="GO_Central"/>
</dbReference>
<dbReference type="GO" id="GO:0051156">
    <property type="term" value="P:glucose 6-phosphate metabolic process"/>
    <property type="evidence" value="ECO:0000315"/>
    <property type="project" value="CGD"/>
</dbReference>
<dbReference type="GO" id="GO:0006006">
    <property type="term" value="P:glucose metabolic process"/>
    <property type="evidence" value="ECO:0000318"/>
    <property type="project" value="GO_Central"/>
</dbReference>
<dbReference type="GO" id="GO:0006096">
    <property type="term" value="P:glycolytic process"/>
    <property type="evidence" value="ECO:0000318"/>
    <property type="project" value="GO_Central"/>
</dbReference>
<dbReference type="GO" id="GO:0001678">
    <property type="term" value="P:intracellular glucose homeostasis"/>
    <property type="evidence" value="ECO:0000318"/>
    <property type="project" value="GO_Central"/>
</dbReference>
<dbReference type="GO" id="GO:0006013">
    <property type="term" value="P:mannose metabolic process"/>
    <property type="evidence" value="ECO:0000318"/>
    <property type="project" value="GO_Central"/>
</dbReference>
<dbReference type="CDD" id="cd24087">
    <property type="entry name" value="ASKHA_NBD_HK1-2_fungi"/>
    <property type="match status" value="1"/>
</dbReference>
<dbReference type="FunFam" id="3.30.420.40:FF:000092">
    <property type="entry name" value="Phosphotransferase"/>
    <property type="match status" value="1"/>
</dbReference>
<dbReference type="FunFam" id="3.40.367.20:FF:000004">
    <property type="entry name" value="Phosphotransferase"/>
    <property type="match status" value="1"/>
</dbReference>
<dbReference type="Gene3D" id="1.10.287.1250">
    <property type="match status" value="1"/>
</dbReference>
<dbReference type="Gene3D" id="3.30.420.40">
    <property type="match status" value="1"/>
</dbReference>
<dbReference type="Gene3D" id="3.40.367.20">
    <property type="match status" value="1"/>
</dbReference>
<dbReference type="InterPro" id="IPR043129">
    <property type="entry name" value="ATPase_NBD"/>
</dbReference>
<dbReference type="InterPro" id="IPR001312">
    <property type="entry name" value="Hexokinase"/>
</dbReference>
<dbReference type="InterPro" id="IPR022673">
    <property type="entry name" value="Hexokinase_C"/>
</dbReference>
<dbReference type="InterPro" id="IPR022672">
    <property type="entry name" value="Hexokinase_N"/>
</dbReference>
<dbReference type="PANTHER" id="PTHR19443">
    <property type="entry name" value="HEXOKINASE"/>
    <property type="match status" value="1"/>
</dbReference>
<dbReference type="PANTHER" id="PTHR19443:SF16">
    <property type="entry name" value="HEXOKINASE TYPE 1-RELATED"/>
    <property type="match status" value="1"/>
</dbReference>
<dbReference type="Pfam" id="PF00349">
    <property type="entry name" value="Hexokinase_1"/>
    <property type="match status" value="1"/>
</dbReference>
<dbReference type="Pfam" id="PF03727">
    <property type="entry name" value="Hexokinase_2"/>
    <property type="match status" value="1"/>
</dbReference>
<dbReference type="PRINTS" id="PR00475">
    <property type="entry name" value="HEXOKINASE"/>
</dbReference>
<dbReference type="SUPFAM" id="SSF53067">
    <property type="entry name" value="Actin-like ATPase domain"/>
    <property type="match status" value="2"/>
</dbReference>
<dbReference type="PROSITE" id="PS51748">
    <property type="entry name" value="HEXOKINASE_2"/>
    <property type="match status" value="1"/>
</dbReference>
<sequence>MVHLGPKPAQKRKGTFTDVSPQLLEALKPIQEQFTISADKLRAIVKHFISELDRGLSKAGGNIPMIPGWVMDFPTGKETGSYLAIDLGGTNLRVVLVKLGGNRDFDTTQSKFALPAHMRTATSDELWDFIAKCLKEFVDEIYPDGCSEPLPLGFTFSYPASQNRINEGILQRWTKGWSIDGIEGKDVVPMLQKAIKKVGVPIDVVALINDTTGTLVASMYTDPEAKMGLIFGTGVNGAYFDVVKDIPKLEGKCPSDIPPESPMAINCEYGSFDNEKYILPRTKYDVQIDEESPRPGQQTFEKMISGYYLGEVLRLILLEFAEEKKLIFKGQNLDKLKVPYVMDASYPSKIEEDPFENLSDVADLFREKLGIETTEPERKIIRCLAELIGERSARFSVCGIAAICQKRGYKTAHCAADGSVYNKYPGFKERTAQALRDIYEWPADVKDPIIIVPAEDGSGVGAAVIAALTEKRLKEGKSVGLLGA</sequence>
<protein>
    <recommendedName>
        <fullName>Hexokinase-2</fullName>
        <ecNumber evidence="1">2.7.1.1</ecNumber>
    </recommendedName>
    <alternativeName>
        <fullName>Cytoplasmic antigenic protein 3</fullName>
    </alternativeName>
    <alternativeName>
        <fullName>Hexokinase PII</fullName>
    </alternativeName>
    <alternativeName>
        <fullName>Hexokinase-B</fullName>
    </alternativeName>
</protein>
<organism>
    <name type="scientific">Candida albicans (strain SC5314 / ATCC MYA-2876)</name>
    <name type="common">Yeast</name>
    <dbReference type="NCBI Taxonomy" id="237561"/>
    <lineage>
        <taxon>Eukaryota</taxon>
        <taxon>Fungi</taxon>
        <taxon>Dikarya</taxon>
        <taxon>Ascomycota</taxon>
        <taxon>Saccharomycotina</taxon>
        <taxon>Pichiomycetes</taxon>
        <taxon>Debaryomycetaceae</taxon>
        <taxon>Candida/Lodderomyces clade</taxon>
        <taxon>Candida</taxon>
    </lineage>
</organism>
<gene>
    <name type="primary">HXK2</name>
    <name type="ordered locus">CAALFM_CR04510WA</name>
    <name type="ORF">CaO19.542</name>
    <name type="ORF">CaO19.8176</name>
</gene>
<feature type="chain" id="PRO_0000089303" description="Hexokinase-2">
    <location>
        <begin position="1"/>
        <end position="484"/>
    </location>
</feature>
<feature type="domain" description="Hexokinase" evidence="2">
    <location>
        <begin position="21"/>
        <end position="467"/>
    </location>
</feature>
<feature type="region of interest" description="Hexokinase small subdomain" evidence="2">
    <location>
        <begin position="75"/>
        <end position="208"/>
    </location>
</feature>
<feature type="region of interest" description="Hexokinase large subdomain" evidence="2">
    <location>
        <begin position="209"/>
        <end position="456"/>
    </location>
</feature>